<organism>
    <name type="scientific">Mycolicibacterium paratuberculosis (strain ATCC BAA-968 / K-10)</name>
    <name type="common">Mycobacterium paratuberculosis</name>
    <dbReference type="NCBI Taxonomy" id="262316"/>
    <lineage>
        <taxon>Bacteria</taxon>
        <taxon>Bacillati</taxon>
        <taxon>Actinomycetota</taxon>
        <taxon>Actinomycetes</taxon>
        <taxon>Mycobacteriales</taxon>
        <taxon>Mycobacteriaceae</taxon>
        <taxon>Mycobacterium</taxon>
        <taxon>Mycobacterium avium complex (MAC)</taxon>
    </lineage>
</organism>
<reference key="1">
    <citation type="journal article" date="2005" name="Proc. Natl. Acad. Sci. U.S.A.">
        <title>The complete genome sequence of Mycobacterium avium subspecies paratuberculosis.</title>
        <authorList>
            <person name="Li L."/>
            <person name="Bannantine J.P."/>
            <person name="Zhang Q."/>
            <person name="Amonsin A."/>
            <person name="May B.J."/>
            <person name="Alt D."/>
            <person name="Banerji N."/>
            <person name="Kanjilal S."/>
            <person name="Kapur V."/>
        </authorList>
    </citation>
    <scope>NUCLEOTIDE SEQUENCE [LARGE SCALE GENOMIC DNA]</scope>
    <source>
        <strain>ATCC BAA-968 / K-10</strain>
    </source>
</reference>
<accession>Q73SD4</accession>
<proteinExistence type="inferred from homology"/>
<dbReference type="EMBL" id="AE016958">
    <property type="protein sequence ID" value="AAS06690.1"/>
    <property type="molecule type" value="Genomic_DNA"/>
</dbReference>
<dbReference type="RefSeq" id="WP_003879423.1">
    <property type="nucleotide sequence ID" value="NZ_CP106873.1"/>
</dbReference>
<dbReference type="SMR" id="Q73SD4"/>
<dbReference type="STRING" id="262316.MAP_4140"/>
<dbReference type="GeneID" id="93493130"/>
<dbReference type="KEGG" id="mpa:MAP_4140"/>
<dbReference type="eggNOG" id="COG0048">
    <property type="taxonomic scope" value="Bacteria"/>
</dbReference>
<dbReference type="HOGENOM" id="CLU_104295_1_2_11"/>
<dbReference type="Proteomes" id="UP000000580">
    <property type="component" value="Chromosome"/>
</dbReference>
<dbReference type="GO" id="GO:0015935">
    <property type="term" value="C:small ribosomal subunit"/>
    <property type="evidence" value="ECO:0007669"/>
    <property type="project" value="InterPro"/>
</dbReference>
<dbReference type="GO" id="GO:0019843">
    <property type="term" value="F:rRNA binding"/>
    <property type="evidence" value="ECO:0007669"/>
    <property type="project" value="UniProtKB-UniRule"/>
</dbReference>
<dbReference type="GO" id="GO:0003735">
    <property type="term" value="F:structural constituent of ribosome"/>
    <property type="evidence" value="ECO:0007669"/>
    <property type="project" value="InterPro"/>
</dbReference>
<dbReference type="GO" id="GO:0000049">
    <property type="term" value="F:tRNA binding"/>
    <property type="evidence" value="ECO:0007669"/>
    <property type="project" value="UniProtKB-UniRule"/>
</dbReference>
<dbReference type="GO" id="GO:0006412">
    <property type="term" value="P:translation"/>
    <property type="evidence" value="ECO:0007669"/>
    <property type="project" value="UniProtKB-UniRule"/>
</dbReference>
<dbReference type="CDD" id="cd03368">
    <property type="entry name" value="Ribosomal_S12"/>
    <property type="match status" value="1"/>
</dbReference>
<dbReference type="FunFam" id="2.40.50.140:FF:000001">
    <property type="entry name" value="30S ribosomal protein S12"/>
    <property type="match status" value="1"/>
</dbReference>
<dbReference type="Gene3D" id="2.40.50.140">
    <property type="entry name" value="Nucleic acid-binding proteins"/>
    <property type="match status" value="1"/>
</dbReference>
<dbReference type="HAMAP" id="MF_00403_B">
    <property type="entry name" value="Ribosomal_uS12_B"/>
    <property type="match status" value="1"/>
</dbReference>
<dbReference type="InterPro" id="IPR012340">
    <property type="entry name" value="NA-bd_OB-fold"/>
</dbReference>
<dbReference type="InterPro" id="IPR006032">
    <property type="entry name" value="Ribosomal_uS12"/>
</dbReference>
<dbReference type="InterPro" id="IPR005679">
    <property type="entry name" value="Ribosomal_uS12_bac"/>
</dbReference>
<dbReference type="NCBIfam" id="TIGR00981">
    <property type="entry name" value="rpsL_bact"/>
    <property type="match status" value="1"/>
</dbReference>
<dbReference type="PANTHER" id="PTHR11652">
    <property type="entry name" value="30S RIBOSOMAL PROTEIN S12 FAMILY MEMBER"/>
    <property type="match status" value="1"/>
</dbReference>
<dbReference type="Pfam" id="PF00164">
    <property type="entry name" value="Ribosom_S12_S23"/>
    <property type="match status" value="1"/>
</dbReference>
<dbReference type="PIRSF" id="PIRSF002133">
    <property type="entry name" value="Ribosomal_S12/S23"/>
    <property type="match status" value="1"/>
</dbReference>
<dbReference type="PRINTS" id="PR01034">
    <property type="entry name" value="RIBOSOMALS12"/>
</dbReference>
<dbReference type="SUPFAM" id="SSF50249">
    <property type="entry name" value="Nucleic acid-binding proteins"/>
    <property type="match status" value="1"/>
</dbReference>
<dbReference type="PROSITE" id="PS00055">
    <property type="entry name" value="RIBOSOMAL_S12"/>
    <property type="match status" value="1"/>
</dbReference>
<gene>
    <name evidence="2" type="primary">rpsL</name>
    <name type="ordered locus">MAP_4140</name>
</gene>
<keyword id="KW-0488">Methylation</keyword>
<keyword id="KW-1185">Reference proteome</keyword>
<keyword id="KW-0687">Ribonucleoprotein</keyword>
<keyword id="KW-0689">Ribosomal protein</keyword>
<keyword id="KW-0694">RNA-binding</keyword>
<keyword id="KW-0699">rRNA-binding</keyword>
<keyword id="KW-0820">tRNA-binding</keyword>
<name>RS12_MYCPA</name>
<sequence>MPTIQQLVRKGRRDKIGKVKTAALKGSPQRRGVCTRVYTTTPKKPNSALRKVARVKLTSQVEVTAYIPGEGHNLQEHSMVLVRGGRVKDLPGVRYKIIRGSLDTQGVKNRKQARSRYGAKKEKS</sequence>
<comment type="function">
    <text evidence="2">With S4 and S5 plays an important role in translational accuracy.</text>
</comment>
<comment type="function">
    <text evidence="2">Interacts with and stabilizes bases of the 16S rRNA that are involved in tRNA selection in the A site and with the mRNA backbone. Located at the interface of the 30S and 50S subunits, it traverses the body of the 30S subunit contacting proteins on the other side and probably holding the rRNA structure together. The combined cluster of proteins S8, S12 and S17 appears to hold together the shoulder and platform of the 30S subunit.</text>
</comment>
<comment type="subunit">
    <text evidence="2">Part of the 30S ribosomal subunit. Contacts proteins S8 and S17. May interact with IF1 in the 30S initiation complex.</text>
</comment>
<comment type="similarity">
    <text evidence="2">Belongs to the universal ribosomal protein uS12 family.</text>
</comment>
<feature type="chain" id="PRO_0000146266" description="Small ribosomal subunit protein uS12">
    <location>
        <begin position="1"/>
        <end position="124"/>
    </location>
</feature>
<feature type="region of interest" description="Disordered" evidence="3">
    <location>
        <begin position="105"/>
        <end position="124"/>
    </location>
</feature>
<feature type="compositionally biased region" description="Basic residues" evidence="3">
    <location>
        <begin position="108"/>
        <end position="118"/>
    </location>
</feature>
<feature type="modified residue" description="3-methylthioaspartic acid" evidence="1">
    <location>
        <position position="89"/>
    </location>
</feature>
<evidence type="ECO:0000250" key="1"/>
<evidence type="ECO:0000255" key="2">
    <source>
        <dbReference type="HAMAP-Rule" id="MF_00403"/>
    </source>
</evidence>
<evidence type="ECO:0000256" key="3">
    <source>
        <dbReference type="SAM" id="MobiDB-lite"/>
    </source>
</evidence>
<evidence type="ECO:0000305" key="4"/>
<protein>
    <recommendedName>
        <fullName evidence="2">Small ribosomal subunit protein uS12</fullName>
    </recommendedName>
    <alternativeName>
        <fullName evidence="4">30S ribosomal protein S12</fullName>
    </alternativeName>
</protein>